<evidence type="ECO:0000250" key="1"/>
<evidence type="ECO:0000256" key="2">
    <source>
        <dbReference type="SAM" id="MobiDB-lite"/>
    </source>
</evidence>
<evidence type="ECO:0000305" key="3"/>
<organism>
    <name type="scientific">Infectious laryngotracheitis virus (strain Thorne V882)</name>
    <name type="common">ILTV</name>
    <name type="synonym">Gallid herpesvirus 1</name>
    <dbReference type="NCBI Taxonomy" id="10344"/>
    <lineage>
        <taxon>Viruses</taxon>
        <taxon>Duplodnaviria</taxon>
        <taxon>Heunggongvirae</taxon>
        <taxon>Peploviricota</taxon>
        <taxon>Herviviricetes</taxon>
        <taxon>Herpesvirales</taxon>
        <taxon>Orthoherpesviridae</taxon>
        <taxon>Alphaherpesvirinae</taxon>
        <taxon>Iltovirus</taxon>
        <taxon>Iltovirus gallidalpha1</taxon>
        <taxon>Infectious laryngotracheitis virus</taxon>
    </lineage>
</organism>
<keyword id="KW-1035">Host cytoplasm</keyword>
<keyword id="KW-1040">Host Golgi apparatus</keyword>
<keyword id="KW-1048">Host nucleus</keyword>
<keyword id="KW-0426">Late protein</keyword>
<keyword id="KW-0946">Virion</keyword>
<name>UL24_ILTVT</name>
<reference key="1">
    <citation type="journal article" date="1990" name="J. Gen. Virol.">
        <title>Analysis of the nucleotide sequence of DNA from the region of the thymidine kinase gene of infectious laryngotracheitis virus; potential evolutionary relationships between the herpesvirus subfamilies.</title>
        <authorList>
            <person name="Griffin A.M."/>
            <person name="Boursnell M.E."/>
        </authorList>
    </citation>
    <scope>NUCLEOTIDE SEQUENCE [GENOMIC DNA]</scope>
</reference>
<sequence>MARRRKEVQRGESRSHRSRTRSKTAHHRKFSRRQLRPSLRARLNAGIRCHNRFYRALVRSLEEVFEGGGDGRLAYTIIPQCKPAGGKIVVMFEVNLGLRKPDCICLLETQHEMKCIVIELKTCRFSKSLMTESKLRQGYTGTLQLRDSARLLENLAVPGTEKVKILSLLVFVAQRGMNILAVKTVGETVINVSSELFFVTLATRSQYLKTFCAKLEPRVSHARSKYQQESAKNADLASPAPSALQTVAALFSSRVGKESATKPASYSTSTEESKNLSEPCFDPDSNL</sequence>
<comment type="function">
    <text evidence="1">May participate in nuclear egress of viral particles. Plays a role in the dispersal of several host nucleolar proteins including NCL/nucleolin and NPM1. Since deletion of host NCL/nucleolin negatively impact on nuclear egress, UL24 supposedly acts on this process through its effect on host nucleoli (By similarity).</text>
</comment>
<comment type="subcellular location">
    <subcellularLocation>
        <location evidence="1">Virion</location>
    </subcellularLocation>
    <subcellularLocation>
        <location evidence="1">Host cytoplasm</location>
    </subcellularLocation>
    <subcellularLocation>
        <location evidence="1">Host nucleus</location>
        <location evidence="1">Host nucleolus</location>
    </subcellularLocation>
    <subcellularLocation>
        <location evidence="1">Host Golgi apparatus</location>
    </subcellularLocation>
</comment>
<comment type="induction">
    <text>Expressed late in the infection cycle.</text>
</comment>
<comment type="similarity">
    <text evidence="3">Belongs to the herpesviridae UL24 family.</text>
</comment>
<proteinExistence type="evidence at transcript level"/>
<feature type="chain" id="PRO_0000115991" description="Protein UL24 homolog">
    <location>
        <begin position="1"/>
        <end position="287"/>
    </location>
</feature>
<feature type="region of interest" description="Disordered" evidence="2">
    <location>
        <begin position="1"/>
        <end position="33"/>
    </location>
</feature>
<feature type="region of interest" description="Disordered" evidence="2">
    <location>
        <begin position="254"/>
        <end position="287"/>
    </location>
</feature>
<feature type="compositionally biased region" description="Basic residues" evidence="2">
    <location>
        <begin position="16"/>
        <end position="33"/>
    </location>
</feature>
<dbReference type="EMBL" id="D00565">
    <property type="protein sequence ID" value="BAA00441.1"/>
    <property type="molecule type" value="Genomic_DNA"/>
</dbReference>
<dbReference type="PIR" id="C43675">
    <property type="entry name" value="C43675"/>
</dbReference>
<dbReference type="RefSeq" id="YP_182353.1">
    <property type="nucleotide sequence ID" value="NC_006623.1"/>
</dbReference>
<dbReference type="GeneID" id="3239036"/>
<dbReference type="KEGG" id="vg:3239036"/>
<dbReference type="GO" id="GO:0044177">
    <property type="term" value="C:host cell Golgi apparatus"/>
    <property type="evidence" value="ECO:0007669"/>
    <property type="project" value="UniProtKB-SubCell"/>
</dbReference>
<dbReference type="GO" id="GO:0044196">
    <property type="term" value="C:host cell nucleolus"/>
    <property type="evidence" value="ECO:0007669"/>
    <property type="project" value="UniProtKB-SubCell"/>
</dbReference>
<dbReference type="GO" id="GO:0044423">
    <property type="term" value="C:virion component"/>
    <property type="evidence" value="ECO:0007669"/>
    <property type="project" value="UniProtKB-KW"/>
</dbReference>
<dbReference type="InterPro" id="IPR002580">
    <property type="entry name" value="Herpes_UL24"/>
</dbReference>
<dbReference type="Pfam" id="PF01646">
    <property type="entry name" value="Herpes_UL24"/>
    <property type="match status" value="1"/>
</dbReference>
<organismHost>
    <name type="scientific">Gallus gallus</name>
    <name type="common">Chicken</name>
    <dbReference type="NCBI Taxonomy" id="9031"/>
</organismHost>
<accession>P23986</accession>
<protein>
    <recommendedName>
        <fullName>Protein UL24 homolog</fullName>
    </recommendedName>
    <alternativeName>
        <fullName>ORF 3</fullName>
    </alternativeName>
</protein>